<gene>
    <name evidence="1" type="primary">ndhB1</name>
</gene>
<evidence type="ECO:0000255" key="1">
    <source>
        <dbReference type="HAMAP-Rule" id="MF_00445"/>
    </source>
</evidence>
<name>NU2C1_CARPA</name>
<sequence length="510" mass="56520">MIWHVQNENFILDSTRIFMKAFHLLLFDGSLIFPECILIFGLILLLMIDSTSDQKDIPWLYFISSTSLVMSITALLFRWREEPMISFSGNFQTNNFNEIFQFLILLCSTLCIPLSVEYIECTEMAITEFLLFILTATLGGMFLCGANDLITIFVAPECFSLCSYLLSGYTKKDVRSNEATTKYLLMGGASSSILVHGFSWLYGSSGGEIELQEIVNGLINTQMYNSPGISIALIFITVGIGFKLSPAPSHQWTPDVYEGSPTPVVAFLSVTSKVAASASATRIFDIPFYFSSNEWHLLLEILAILSMILGNLIAITQTSMKRMLAYSSIGQIGYVIIGIIVGDSNGGYASMITYMLFYISMNLGTFACIVSFGLRTGTDNIRDYAGLYTKDPFLALSLALCLLSLGGLPPLAGFFGKLHLFWCGWQAGLYFLVSIGLLTSVLSIYYYLKIIKLLMTGRNQEITPHVRNYRRSPLRSNNSIELSMIVCVIASTIPGISMNPIIAIAQDTLF</sequence>
<geneLocation type="chloroplast"/>
<proteinExistence type="inferred from homology"/>
<reference key="1">
    <citation type="journal article" date="2008" name="Nature">
        <title>The draft genome of the transgenic tropical fruit tree papaya (Carica papaya Linnaeus).</title>
        <authorList>
            <person name="Ming R."/>
            <person name="Hou S."/>
            <person name="Feng Y."/>
            <person name="Yu Q."/>
            <person name="Dionne-Laporte A."/>
            <person name="Saw J.H."/>
            <person name="Senin P."/>
            <person name="Wang W."/>
            <person name="Ly B.V."/>
            <person name="Lewis K.L."/>
            <person name="Salzberg S.L."/>
            <person name="Feng L."/>
            <person name="Jones M.R."/>
            <person name="Skelton R.L."/>
            <person name="Murray J.E."/>
            <person name="Chen C."/>
            <person name="Qian W."/>
            <person name="Shen J."/>
            <person name="Du P."/>
            <person name="Eustice M."/>
            <person name="Tong E."/>
            <person name="Tang H."/>
            <person name="Lyons E."/>
            <person name="Paull R.E."/>
            <person name="Michael T.P."/>
            <person name="Wall K."/>
            <person name="Rice D.W."/>
            <person name="Albert H."/>
            <person name="Wang M.L."/>
            <person name="Zhu Y.J."/>
            <person name="Schatz M."/>
            <person name="Nagarajan N."/>
            <person name="Acob R.A."/>
            <person name="Guan P."/>
            <person name="Blas A."/>
            <person name="Wai C.M."/>
            <person name="Ackerman C.M."/>
            <person name="Ren Y."/>
            <person name="Liu C."/>
            <person name="Wang J."/>
            <person name="Wang J."/>
            <person name="Na J.K."/>
            <person name="Shakirov E.V."/>
            <person name="Haas B."/>
            <person name="Thimmapuram J."/>
            <person name="Nelson D."/>
            <person name="Wang X."/>
            <person name="Bowers J.E."/>
            <person name="Gschwend A.R."/>
            <person name="Delcher A.L."/>
            <person name="Singh R."/>
            <person name="Suzuki J.Y."/>
            <person name="Tripathi S."/>
            <person name="Neupane K."/>
            <person name="Wei H."/>
            <person name="Irikura B."/>
            <person name="Paidi M."/>
            <person name="Jiang N."/>
            <person name="Zhang W."/>
            <person name="Presting G."/>
            <person name="Windsor A."/>
            <person name="Navajas-Perez R."/>
            <person name="Torres M.J."/>
            <person name="Feltus F.A."/>
            <person name="Porter B."/>
            <person name="Li Y."/>
            <person name="Burroughs A.M."/>
            <person name="Luo M.C."/>
            <person name="Liu L."/>
            <person name="Christopher D.A."/>
            <person name="Mount S.M."/>
            <person name="Moore P.H."/>
            <person name="Sugimura T."/>
            <person name="Jiang J."/>
            <person name="Schuler M.A."/>
            <person name="Friedman V."/>
            <person name="Mitchell-Olds T."/>
            <person name="Shippen D.E."/>
            <person name="dePamphilis C.W."/>
            <person name="Palmer J.D."/>
            <person name="Freeling M."/>
            <person name="Paterson A.H."/>
            <person name="Gonsalves D."/>
            <person name="Wang L."/>
            <person name="Alam M."/>
        </authorList>
    </citation>
    <scope>NUCLEOTIDE SEQUENCE [LARGE SCALE GENOMIC DNA]</scope>
    <source>
        <strain>cv. SunUp</strain>
    </source>
</reference>
<comment type="function">
    <text evidence="1">NDH shuttles electrons from NAD(P)H:plastoquinone, via FMN and iron-sulfur (Fe-S) centers, to quinones in the photosynthetic chain and possibly in a chloroplast respiratory chain. The immediate electron acceptor for the enzyme in this species is believed to be plastoquinone. Couples the redox reaction to proton translocation, and thus conserves the redox energy in a proton gradient.</text>
</comment>
<comment type="catalytic activity">
    <reaction evidence="1">
        <text>a plastoquinone + NADH + (n+1) H(+)(in) = a plastoquinol + NAD(+) + n H(+)(out)</text>
        <dbReference type="Rhea" id="RHEA:42608"/>
        <dbReference type="Rhea" id="RHEA-COMP:9561"/>
        <dbReference type="Rhea" id="RHEA-COMP:9562"/>
        <dbReference type="ChEBI" id="CHEBI:15378"/>
        <dbReference type="ChEBI" id="CHEBI:17757"/>
        <dbReference type="ChEBI" id="CHEBI:57540"/>
        <dbReference type="ChEBI" id="CHEBI:57945"/>
        <dbReference type="ChEBI" id="CHEBI:62192"/>
    </reaction>
</comment>
<comment type="catalytic activity">
    <reaction evidence="1">
        <text>a plastoquinone + NADPH + (n+1) H(+)(in) = a plastoquinol + NADP(+) + n H(+)(out)</text>
        <dbReference type="Rhea" id="RHEA:42612"/>
        <dbReference type="Rhea" id="RHEA-COMP:9561"/>
        <dbReference type="Rhea" id="RHEA-COMP:9562"/>
        <dbReference type="ChEBI" id="CHEBI:15378"/>
        <dbReference type="ChEBI" id="CHEBI:17757"/>
        <dbReference type="ChEBI" id="CHEBI:57783"/>
        <dbReference type="ChEBI" id="CHEBI:58349"/>
        <dbReference type="ChEBI" id="CHEBI:62192"/>
    </reaction>
</comment>
<comment type="subunit">
    <text evidence="1">NDH is composed of at least 16 different subunits, 5 of which are encoded in the nucleus.</text>
</comment>
<comment type="subcellular location">
    <subcellularLocation>
        <location evidence="1">Plastid</location>
        <location evidence="1">Chloroplast thylakoid membrane</location>
        <topology evidence="1">Multi-pass membrane protein</topology>
    </subcellularLocation>
</comment>
<comment type="similarity">
    <text evidence="1">Belongs to the complex I subunit 2 family.</text>
</comment>
<keyword id="KW-0150">Chloroplast</keyword>
<keyword id="KW-0472">Membrane</keyword>
<keyword id="KW-0520">NAD</keyword>
<keyword id="KW-0521">NADP</keyword>
<keyword id="KW-0934">Plastid</keyword>
<keyword id="KW-0618">Plastoquinone</keyword>
<keyword id="KW-0874">Quinone</keyword>
<keyword id="KW-0793">Thylakoid</keyword>
<keyword id="KW-1278">Translocase</keyword>
<keyword id="KW-0812">Transmembrane</keyword>
<keyword id="KW-1133">Transmembrane helix</keyword>
<keyword id="KW-0813">Transport</keyword>
<dbReference type="EC" id="7.1.1.-" evidence="1"/>
<dbReference type="EMBL" id="EU431223">
    <property type="protein sequence ID" value="ABY86827.1"/>
    <property type="molecule type" value="Genomic_DNA"/>
</dbReference>
<dbReference type="SMR" id="P0CC40"/>
<dbReference type="KEGG" id="cpap:5878327"/>
<dbReference type="KEGG" id="cpap:5878358"/>
<dbReference type="OrthoDB" id="1075363at2759"/>
<dbReference type="GO" id="GO:0009535">
    <property type="term" value="C:chloroplast thylakoid membrane"/>
    <property type="evidence" value="ECO:0007669"/>
    <property type="project" value="UniProtKB-SubCell"/>
</dbReference>
<dbReference type="GO" id="GO:0008137">
    <property type="term" value="F:NADH dehydrogenase (ubiquinone) activity"/>
    <property type="evidence" value="ECO:0007669"/>
    <property type="project" value="InterPro"/>
</dbReference>
<dbReference type="GO" id="GO:0048038">
    <property type="term" value="F:quinone binding"/>
    <property type="evidence" value="ECO:0007669"/>
    <property type="project" value="UniProtKB-KW"/>
</dbReference>
<dbReference type="GO" id="GO:0042773">
    <property type="term" value="P:ATP synthesis coupled electron transport"/>
    <property type="evidence" value="ECO:0007669"/>
    <property type="project" value="InterPro"/>
</dbReference>
<dbReference type="GO" id="GO:0019684">
    <property type="term" value="P:photosynthesis, light reaction"/>
    <property type="evidence" value="ECO:0007669"/>
    <property type="project" value="UniProtKB-UniRule"/>
</dbReference>
<dbReference type="HAMAP" id="MF_00445">
    <property type="entry name" value="NDH1_NuoN_1"/>
    <property type="match status" value="1"/>
</dbReference>
<dbReference type="InterPro" id="IPR010096">
    <property type="entry name" value="NADH-Q_OxRdtase_suN/2"/>
</dbReference>
<dbReference type="InterPro" id="IPR001750">
    <property type="entry name" value="ND/Mrp_TM"/>
</dbReference>
<dbReference type="InterPro" id="IPR045693">
    <property type="entry name" value="Ndh2_N"/>
</dbReference>
<dbReference type="NCBIfam" id="TIGR01770">
    <property type="entry name" value="NDH_I_N"/>
    <property type="match status" value="1"/>
</dbReference>
<dbReference type="NCBIfam" id="NF002701">
    <property type="entry name" value="PRK02504.1"/>
    <property type="match status" value="1"/>
</dbReference>
<dbReference type="PANTHER" id="PTHR22773">
    <property type="entry name" value="NADH DEHYDROGENASE"/>
    <property type="match status" value="1"/>
</dbReference>
<dbReference type="Pfam" id="PF19530">
    <property type="entry name" value="Ndh2_N"/>
    <property type="match status" value="1"/>
</dbReference>
<dbReference type="Pfam" id="PF00361">
    <property type="entry name" value="Proton_antipo_M"/>
    <property type="match status" value="1"/>
</dbReference>
<dbReference type="PRINTS" id="PR01434">
    <property type="entry name" value="NADHDHGNASE5"/>
</dbReference>
<organism>
    <name type="scientific">Carica papaya</name>
    <name type="common">Papaya</name>
    <dbReference type="NCBI Taxonomy" id="3649"/>
    <lineage>
        <taxon>Eukaryota</taxon>
        <taxon>Viridiplantae</taxon>
        <taxon>Streptophyta</taxon>
        <taxon>Embryophyta</taxon>
        <taxon>Tracheophyta</taxon>
        <taxon>Spermatophyta</taxon>
        <taxon>Magnoliopsida</taxon>
        <taxon>eudicotyledons</taxon>
        <taxon>Gunneridae</taxon>
        <taxon>Pentapetalae</taxon>
        <taxon>rosids</taxon>
        <taxon>malvids</taxon>
        <taxon>Brassicales</taxon>
        <taxon>Caricaceae</taxon>
        <taxon>Carica</taxon>
    </lineage>
</organism>
<protein>
    <recommendedName>
        <fullName evidence="1">NAD(P)H-quinone oxidoreductase subunit 2 A, chloroplastic</fullName>
        <ecNumber evidence="1">7.1.1.-</ecNumber>
    </recommendedName>
    <alternativeName>
        <fullName evidence="1">NAD(P)H dehydrogenase, subunit 2 A</fullName>
    </alternativeName>
    <alternativeName>
        <fullName evidence="1">NADH-plastoquinone oxidoreductase subunit 2 A</fullName>
    </alternativeName>
</protein>
<feature type="chain" id="PRO_0000344261" description="NAD(P)H-quinone oxidoreductase subunit 2 A, chloroplastic">
    <location>
        <begin position="1"/>
        <end position="510"/>
    </location>
</feature>
<feature type="transmembrane region" description="Helical" evidence="1">
    <location>
        <begin position="24"/>
        <end position="44"/>
    </location>
</feature>
<feature type="transmembrane region" description="Helical" evidence="1">
    <location>
        <begin position="57"/>
        <end position="77"/>
    </location>
</feature>
<feature type="transmembrane region" description="Helical" evidence="1">
    <location>
        <begin position="99"/>
        <end position="119"/>
    </location>
</feature>
<feature type="transmembrane region" description="Helical" evidence="1">
    <location>
        <begin position="124"/>
        <end position="144"/>
    </location>
</feature>
<feature type="transmembrane region" description="Helical" evidence="1">
    <location>
        <begin position="149"/>
        <end position="169"/>
    </location>
</feature>
<feature type="transmembrane region" description="Helical" evidence="1">
    <location>
        <begin position="183"/>
        <end position="203"/>
    </location>
</feature>
<feature type="transmembrane region" description="Helical" evidence="1">
    <location>
        <begin position="227"/>
        <end position="247"/>
    </location>
</feature>
<feature type="transmembrane region" description="Helical" evidence="1">
    <location>
        <begin position="295"/>
        <end position="315"/>
    </location>
</feature>
<feature type="transmembrane region" description="Helical" evidence="1">
    <location>
        <begin position="323"/>
        <end position="343"/>
    </location>
</feature>
<feature type="transmembrane region" description="Helical" evidence="1">
    <location>
        <begin position="354"/>
        <end position="374"/>
    </location>
</feature>
<feature type="transmembrane region" description="Helical" evidence="1">
    <location>
        <begin position="395"/>
        <end position="415"/>
    </location>
</feature>
<feature type="transmembrane region" description="Helical" evidence="1">
    <location>
        <begin position="418"/>
        <end position="438"/>
    </location>
</feature>
<feature type="transmembrane region" description="Helical" evidence="1">
    <location>
        <begin position="484"/>
        <end position="504"/>
    </location>
</feature>
<accession>P0CC40</accession>
<accession>B1A979</accession>